<sequence length="248" mass="26984">MAKPEYYYGVHSVESLLELEPERVLTLFTLKGRDDQRLQKILELAEPFGISVQKASRDSLEKLAGLPFHQGVVAAVRPHPVLNEKDLDQLLQNNDQALLLALDQVTDPHNLGACIRTAAAMGIAAVIVPRDRSASLTPTARKVAAGGAEKVKFIQVTNLARTLAHIKAHFFVKVVGTMLDEKALPIQKYDFSGNVAIVMGAEDTGLRPITQSQCDQTVYIPMSGNLQSLNVSVAAGMALYEACRQRLG</sequence>
<proteinExistence type="inferred from homology"/>
<evidence type="ECO:0000255" key="1">
    <source>
        <dbReference type="HAMAP-Rule" id="MF_01887"/>
    </source>
</evidence>
<organism>
    <name type="scientific">Acinetobacter baylyi (strain ATCC 33305 / BD413 / ADP1)</name>
    <dbReference type="NCBI Taxonomy" id="62977"/>
    <lineage>
        <taxon>Bacteria</taxon>
        <taxon>Pseudomonadati</taxon>
        <taxon>Pseudomonadota</taxon>
        <taxon>Gammaproteobacteria</taxon>
        <taxon>Moraxellales</taxon>
        <taxon>Moraxellaceae</taxon>
        <taxon>Acinetobacter</taxon>
    </lineage>
</organism>
<accession>Q6FF50</accession>
<keyword id="KW-0963">Cytoplasm</keyword>
<keyword id="KW-0489">Methyltransferase</keyword>
<keyword id="KW-0698">rRNA processing</keyword>
<keyword id="KW-0949">S-adenosyl-L-methionine</keyword>
<keyword id="KW-0808">Transferase</keyword>
<name>RLMB_ACIAD</name>
<gene>
    <name evidence="1" type="primary">rlmB</name>
    <name type="ordered locus">ACIAD0357</name>
</gene>
<protein>
    <recommendedName>
        <fullName evidence="1">23S rRNA (guanosine-2'-O-)-methyltransferase RlmB</fullName>
        <ecNumber evidence="1">2.1.1.185</ecNumber>
    </recommendedName>
    <alternativeName>
        <fullName evidence="1">23S rRNA (guanosine2251 2'-O)-methyltransferase</fullName>
    </alternativeName>
    <alternativeName>
        <fullName evidence="1">23S rRNA Gm2251 2'-O-methyltransferase</fullName>
    </alternativeName>
</protein>
<comment type="function">
    <text evidence="1">Specifically methylates the ribose of guanosine 2251 in 23S rRNA.</text>
</comment>
<comment type="catalytic activity">
    <reaction evidence="1">
        <text>guanosine(2251) in 23S rRNA + S-adenosyl-L-methionine = 2'-O-methylguanosine(2251) in 23S rRNA + S-adenosyl-L-homocysteine + H(+)</text>
        <dbReference type="Rhea" id="RHEA:24140"/>
        <dbReference type="Rhea" id="RHEA-COMP:10239"/>
        <dbReference type="Rhea" id="RHEA-COMP:10241"/>
        <dbReference type="ChEBI" id="CHEBI:15378"/>
        <dbReference type="ChEBI" id="CHEBI:57856"/>
        <dbReference type="ChEBI" id="CHEBI:59789"/>
        <dbReference type="ChEBI" id="CHEBI:74269"/>
        <dbReference type="ChEBI" id="CHEBI:74445"/>
        <dbReference type="EC" id="2.1.1.185"/>
    </reaction>
</comment>
<comment type="subcellular location">
    <subcellularLocation>
        <location evidence="1">Cytoplasm</location>
    </subcellularLocation>
</comment>
<comment type="similarity">
    <text evidence="1">Belongs to the class IV-like SAM-binding methyltransferase superfamily. RNA methyltransferase TrmH family. RlmB subfamily.</text>
</comment>
<feature type="chain" id="PRO_0000159777" description="23S rRNA (guanosine-2'-O-)-methyltransferase RlmB">
    <location>
        <begin position="1"/>
        <end position="248"/>
    </location>
</feature>
<feature type="binding site" evidence="1">
    <location>
        <position position="200"/>
    </location>
    <ligand>
        <name>S-adenosyl-L-methionine</name>
        <dbReference type="ChEBI" id="CHEBI:59789"/>
    </ligand>
</feature>
<feature type="binding site" evidence="1">
    <location>
        <position position="220"/>
    </location>
    <ligand>
        <name>S-adenosyl-L-methionine</name>
        <dbReference type="ChEBI" id="CHEBI:59789"/>
    </ligand>
</feature>
<feature type="binding site" evidence="1">
    <location>
        <position position="229"/>
    </location>
    <ligand>
        <name>S-adenosyl-L-methionine</name>
        <dbReference type="ChEBI" id="CHEBI:59789"/>
    </ligand>
</feature>
<reference key="1">
    <citation type="journal article" date="2004" name="Nucleic Acids Res.">
        <title>Unique features revealed by the genome sequence of Acinetobacter sp. ADP1, a versatile and naturally transformation competent bacterium.</title>
        <authorList>
            <person name="Barbe V."/>
            <person name="Vallenet D."/>
            <person name="Fonknechten N."/>
            <person name="Kreimeyer A."/>
            <person name="Oztas S."/>
            <person name="Labarre L."/>
            <person name="Cruveiller S."/>
            <person name="Robert C."/>
            <person name="Duprat S."/>
            <person name="Wincker P."/>
            <person name="Ornston L.N."/>
            <person name="Weissenbach J."/>
            <person name="Marliere P."/>
            <person name="Cohen G.N."/>
            <person name="Medigue C."/>
        </authorList>
    </citation>
    <scope>NUCLEOTIDE SEQUENCE [LARGE SCALE GENOMIC DNA]</scope>
    <source>
        <strain>ATCC 33305 / BD413 / ADP1</strain>
    </source>
</reference>
<dbReference type="EC" id="2.1.1.185" evidence="1"/>
<dbReference type="EMBL" id="CR543861">
    <property type="protein sequence ID" value="CAG67307.1"/>
    <property type="molecule type" value="Genomic_DNA"/>
</dbReference>
<dbReference type="RefSeq" id="WP_004920490.1">
    <property type="nucleotide sequence ID" value="NC_005966.1"/>
</dbReference>
<dbReference type="SMR" id="Q6FF50"/>
<dbReference type="STRING" id="202950.GCA_001485005_00619"/>
<dbReference type="GeneID" id="45232860"/>
<dbReference type="KEGG" id="aci:ACIAD0357"/>
<dbReference type="eggNOG" id="COG0566">
    <property type="taxonomic scope" value="Bacteria"/>
</dbReference>
<dbReference type="HOGENOM" id="CLU_021322_0_1_6"/>
<dbReference type="OrthoDB" id="9785673at2"/>
<dbReference type="BioCyc" id="ASP62977:ACIAD_RS01660-MONOMER"/>
<dbReference type="Proteomes" id="UP000000430">
    <property type="component" value="Chromosome"/>
</dbReference>
<dbReference type="GO" id="GO:0005829">
    <property type="term" value="C:cytosol"/>
    <property type="evidence" value="ECO:0007669"/>
    <property type="project" value="TreeGrafter"/>
</dbReference>
<dbReference type="GO" id="GO:0003723">
    <property type="term" value="F:RNA binding"/>
    <property type="evidence" value="ECO:0007669"/>
    <property type="project" value="InterPro"/>
</dbReference>
<dbReference type="GO" id="GO:0070039">
    <property type="term" value="F:rRNA (guanosine-2'-O-)-methyltransferase activity"/>
    <property type="evidence" value="ECO:0007669"/>
    <property type="project" value="UniProtKB-UniRule"/>
</dbReference>
<dbReference type="CDD" id="cd18103">
    <property type="entry name" value="SpoU-like_RlmB"/>
    <property type="match status" value="1"/>
</dbReference>
<dbReference type="Gene3D" id="3.30.1330.30">
    <property type="match status" value="1"/>
</dbReference>
<dbReference type="Gene3D" id="3.40.1280.10">
    <property type="match status" value="1"/>
</dbReference>
<dbReference type="HAMAP" id="MF_01887">
    <property type="entry name" value="23SrRNA_methyltr_B"/>
    <property type="match status" value="1"/>
</dbReference>
<dbReference type="InterPro" id="IPR024915">
    <property type="entry name" value="23S_rRNA_MeTrfase_RlmB"/>
</dbReference>
<dbReference type="InterPro" id="IPR029028">
    <property type="entry name" value="Alpha/beta_knot_MTases"/>
</dbReference>
<dbReference type="InterPro" id="IPR029064">
    <property type="entry name" value="Ribosomal_eL30-like_sf"/>
</dbReference>
<dbReference type="InterPro" id="IPR004441">
    <property type="entry name" value="rRNA_MeTrfase_TrmH"/>
</dbReference>
<dbReference type="InterPro" id="IPR001537">
    <property type="entry name" value="SpoU_MeTrfase"/>
</dbReference>
<dbReference type="InterPro" id="IPR013123">
    <property type="entry name" value="SpoU_subst-bd"/>
</dbReference>
<dbReference type="InterPro" id="IPR029026">
    <property type="entry name" value="tRNA_m1G_MTases_N"/>
</dbReference>
<dbReference type="NCBIfam" id="TIGR00186">
    <property type="entry name" value="rRNA_methyl_3"/>
    <property type="match status" value="1"/>
</dbReference>
<dbReference type="PANTHER" id="PTHR46429">
    <property type="entry name" value="23S RRNA (GUANOSINE-2'-O-)-METHYLTRANSFERASE RLMB"/>
    <property type="match status" value="1"/>
</dbReference>
<dbReference type="PANTHER" id="PTHR46429:SF1">
    <property type="entry name" value="23S RRNA (GUANOSINE-2'-O-)-METHYLTRANSFERASE RLMB"/>
    <property type="match status" value="1"/>
</dbReference>
<dbReference type="Pfam" id="PF00588">
    <property type="entry name" value="SpoU_methylase"/>
    <property type="match status" value="1"/>
</dbReference>
<dbReference type="Pfam" id="PF08032">
    <property type="entry name" value="SpoU_sub_bind"/>
    <property type="match status" value="1"/>
</dbReference>
<dbReference type="SMART" id="SM00967">
    <property type="entry name" value="SpoU_sub_bind"/>
    <property type="match status" value="1"/>
</dbReference>
<dbReference type="SUPFAM" id="SSF75217">
    <property type="entry name" value="alpha/beta knot"/>
    <property type="match status" value="1"/>
</dbReference>
<dbReference type="SUPFAM" id="SSF55315">
    <property type="entry name" value="L30e-like"/>
    <property type="match status" value="1"/>
</dbReference>